<reference key="1">
    <citation type="submission" date="2008-05" db="EMBL/GenBank/DDBJ databases">
        <title>Genome sequence of Helicobacter pylori from the remote Amazon: traces of Asian ancestry of the first Americans.</title>
        <authorList>
            <person name="Kersulyte D."/>
            <person name="Kalia A."/>
            <person name="Gilman R.H."/>
            <person name="Berg D.E."/>
        </authorList>
    </citation>
    <scope>NUCLEOTIDE SEQUENCE [LARGE SCALE GENOMIC DNA]</scope>
    <source>
        <strain>Shi470</strain>
    </source>
</reference>
<sequence>MARYRGAVERLERRFGVSLALKGERRLSGKSALDKRAYGPGQHGQRRAKTSDYGLQLKEKQKAKMMYGISEKQFRSIFVEANRLDGNTGENLIRLIERRLDNVVYRMGFATTRSSARQLVTHGHVLVDGKRLDIPSYFVRSGQKIEIKEKTKSNPQVVRAMELTAQTGIVPWIDVEKDKKYGIFTRYPEREEVVVPIEERLIVELYSK</sequence>
<evidence type="ECO:0000255" key="1">
    <source>
        <dbReference type="HAMAP-Rule" id="MF_01306"/>
    </source>
</evidence>
<evidence type="ECO:0000305" key="2"/>
<name>RS4_HELPS</name>
<proteinExistence type="inferred from homology"/>
<keyword id="KW-0687">Ribonucleoprotein</keyword>
<keyword id="KW-0689">Ribosomal protein</keyword>
<keyword id="KW-0694">RNA-binding</keyword>
<keyword id="KW-0699">rRNA-binding</keyword>
<dbReference type="EMBL" id="CP001072">
    <property type="protein sequence ID" value="ACD48739.1"/>
    <property type="molecule type" value="Genomic_DNA"/>
</dbReference>
<dbReference type="RefSeq" id="WP_000135247.1">
    <property type="nucleotide sequence ID" value="NC_010698.2"/>
</dbReference>
<dbReference type="SMR" id="B2UV57"/>
<dbReference type="GeneID" id="31757690"/>
<dbReference type="KEGG" id="hps:HPSH_06695"/>
<dbReference type="HOGENOM" id="CLU_092403_0_2_7"/>
<dbReference type="GO" id="GO:0015935">
    <property type="term" value="C:small ribosomal subunit"/>
    <property type="evidence" value="ECO:0007669"/>
    <property type="project" value="InterPro"/>
</dbReference>
<dbReference type="GO" id="GO:0019843">
    <property type="term" value="F:rRNA binding"/>
    <property type="evidence" value="ECO:0007669"/>
    <property type="project" value="UniProtKB-UniRule"/>
</dbReference>
<dbReference type="GO" id="GO:0003735">
    <property type="term" value="F:structural constituent of ribosome"/>
    <property type="evidence" value="ECO:0007669"/>
    <property type="project" value="InterPro"/>
</dbReference>
<dbReference type="GO" id="GO:0042274">
    <property type="term" value="P:ribosomal small subunit biogenesis"/>
    <property type="evidence" value="ECO:0007669"/>
    <property type="project" value="TreeGrafter"/>
</dbReference>
<dbReference type="GO" id="GO:0006412">
    <property type="term" value="P:translation"/>
    <property type="evidence" value="ECO:0007669"/>
    <property type="project" value="UniProtKB-UniRule"/>
</dbReference>
<dbReference type="CDD" id="cd00165">
    <property type="entry name" value="S4"/>
    <property type="match status" value="1"/>
</dbReference>
<dbReference type="FunFam" id="1.10.1050.10:FF:000001">
    <property type="entry name" value="30S ribosomal protein S4"/>
    <property type="match status" value="1"/>
</dbReference>
<dbReference type="FunFam" id="3.10.290.10:FF:000001">
    <property type="entry name" value="30S ribosomal protein S4"/>
    <property type="match status" value="1"/>
</dbReference>
<dbReference type="Gene3D" id="1.10.1050.10">
    <property type="entry name" value="Ribosomal Protein S4 Delta 41, Chain A, domain 1"/>
    <property type="match status" value="1"/>
</dbReference>
<dbReference type="Gene3D" id="3.10.290.10">
    <property type="entry name" value="RNA-binding S4 domain"/>
    <property type="match status" value="1"/>
</dbReference>
<dbReference type="HAMAP" id="MF_01306_B">
    <property type="entry name" value="Ribosomal_uS4_B"/>
    <property type="match status" value="1"/>
</dbReference>
<dbReference type="InterPro" id="IPR022801">
    <property type="entry name" value="Ribosomal_uS4"/>
</dbReference>
<dbReference type="InterPro" id="IPR005709">
    <property type="entry name" value="Ribosomal_uS4_bac-type"/>
</dbReference>
<dbReference type="InterPro" id="IPR018079">
    <property type="entry name" value="Ribosomal_uS4_CS"/>
</dbReference>
<dbReference type="InterPro" id="IPR001912">
    <property type="entry name" value="Ribosomal_uS4_N"/>
</dbReference>
<dbReference type="InterPro" id="IPR002942">
    <property type="entry name" value="S4_RNA-bd"/>
</dbReference>
<dbReference type="InterPro" id="IPR036986">
    <property type="entry name" value="S4_RNA-bd_sf"/>
</dbReference>
<dbReference type="NCBIfam" id="NF003717">
    <property type="entry name" value="PRK05327.1"/>
    <property type="match status" value="1"/>
</dbReference>
<dbReference type="NCBIfam" id="TIGR01017">
    <property type="entry name" value="rpsD_bact"/>
    <property type="match status" value="1"/>
</dbReference>
<dbReference type="PANTHER" id="PTHR11831">
    <property type="entry name" value="30S 40S RIBOSOMAL PROTEIN"/>
    <property type="match status" value="1"/>
</dbReference>
<dbReference type="PANTHER" id="PTHR11831:SF4">
    <property type="entry name" value="SMALL RIBOSOMAL SUBUNIT PROTEIN US4M"/>
    <property type="match status" value="1"/>
</dbReference>
<dbReference type="Pfam" id="PF00163">
    <property type="entry name" value="Ribosomal_S4"/>
    <property type="match status" value="1"/>
</dbReference>
<dbReference type="Pfam" id="PF01479">
    <property type="entry name" value="S4"/>
    <property type="match status" value="1"/>
</dbReference>
<dbReference type="SMART" id="SM01390">
    <property type="entry name" value="Ribosomal_S4"/>
    <property type="match status" value="1"/>
</dbReference>
<dbReference type="SMART" id="SM00363">
    <property type="entry name" value="S4"/>
    <property type="match status" value="1"/>
</dbReference>
<dbReference type="SUPFAM" id="SSF55174">
    <property type="entry name" value="Alpha-L RNA-binding motif"/>
    <property type="match status" value="1"/>
</dbReference>
<dbReference type="PROSITE" id="PS00632">
    <property type="entry name" value="RIBOSOMAL_S4"/>
    <property type="match status" value="1"/>
</dbReference>
<dbReference type="PROSITE" id="PS50889">
    <property type="entry name" value="S4"/>
    <property type="match status" value="1"/>
</dbReference>
<comment type="function">
    <text evidence="1">One of the primary rRNA binding proteins, it binds directly to 16S rRNA where it nucleates assembly of the body of the 30S subunit.</text>
</comment>
<comment type="function">
    <text evidence="1">With S5 and S12 plays an important role in translational accuracy.</text>
</comment>
<comment type="subunit">
    <text evidence="1">Part of the 30S ribosomal subunit. Contacts protein S5. The interaction surface between S4 and S5 is involved in control of translational fidelity.</text>
</comment>
<comment type="similarity">
    <text evidence="1">Belongs to the universal ribosomal protein uS4 family.</text>
</comment>
<protein>
    <recommendedName>
        <fullName evidence="1">Small ribosomal subunit protein uS4</fullName>
    </recommendedName>
    <alternativeName>
        <fullName evidence="2">30S ribosomal protein S4</fullName>
    </alternativeName>
</protein>
<organism>
    <name type="scientific">Helicobacter pylori (strain Shi470)</name>
    <dbReference type="NCBI Taxonomy" id="512562"/>
    <lineage>
        <taxon>Bacteria</taxon>
        <taxon>Pseudomonadati</taxon>
        <taxon>Campylobacterota</taxon>
        <taxon>Epsilonproteobacteria</taxon>
        <taxon>Campylobacterales</taxon>
        <taxon>Helicobacteraceae</taxon>
        <taxon>Helicobacter</taxon>
    </lineage>
</organism>
<accession>B2UV57</accession>
<gene>
    <name evidence="1" type="primary">rpsD</name>
    <name type="ordered locus">HPSH_06695</name>
</gene>
<feature type="chain" id="PRO_1000140744" description="Small ribosomal subunit protein uS4">
    <location>
        <begin position="1"/>
        <end position="208"/>
    </location>
</feature>
<feature type="domain" description="S4 RNA-binding" evidence="1">
    <location>
        <begin position="98"/>
        <end position="161"/>
    </location>
</feature>